<evidence type="ECO:0000255" key="1">
    <source>
        <dbReference type="HAMAP-Rule" id="MF_01333"/>
    </source>
</evidence>
<evidence type="ECO:0000305" key="2"/>
<reference key="1">
    <citation type="journal article" date="2005" name="J. Bacteriol.">
        <title>Swine and poultry pathogens: the complete genome sequences of two strains of Mycoplasma hyopneumoniae and a strain of Mycoplasma synoviae.</title>
        <authorList>
            <person name="Vasconcelos A.T.R."/>
            <person name="Ferreira H.B."/>
            <person name="Bizarro C.V."/>
            <person name="Bonatto S.L."/>
            <person name="Carvalho M.O."/>
            <person name="Pinto P.M."/>
            <person name="Almeida D.F."/>
            <person name="Almeida L.G.P."/>
            <person name="Almeida R."/>
            <person name="Alves-Junior L."/>
            <person name="Assuncao E.N."/>
            <person name="Azevedo V.A.C."/>
            <person name="Bogo M.R."/>
            <person name="Brigido M.M."/>
            <person name="Brocchi M."/>
            <person name="Burity H.A."/>
            <person name="Camargo A.A."/>
            <person name="Camargo S.S."/>
            <person name="Carepo M.S."/>
            <person name="Carraro D.M."/>
            <person name="de Mattos Cascardo J.C."/>
            <person name="Castro L.A."/>
            <person name="Cavalcanti G."/>
            <person name="Chemale G."/>
            <person name="Collevatti R.G."/>
            <person name="Cunha C.W."/>
            <person name="Dallagiovanna B."/>
            <person name="Dambros B.P."/>
            <person name="Dellagostin O.A."/>
            <person name="Falcao C."/>
            <person name="Fantinatti-Garboggini F."/>
            <person name="Felipe M.S.S."/>
            <person name="Fiorentin L."/>
            <person name="Franco G.R."/>
            <person name="Freitas N.S.A."/>
            <person name="Frias D."/>
            <person name="Grangeiro T.B."/>
            <person name="Grisard E.C."/>
            <person name="Guimaraes C.T."/>
            <person name="Hungria M."/>
            <person name="Jardim S.N."/>
            <person name="Krieger M.A."/>
            <person name="Laurino J.P."/>
            <person name="Lima L.F.A."/>
            <person name="Lopes M.I."/>
            <person name="Loreto E.L.S."/>
            <person name="Madeira H.M.F."/>
            <person name="Manfio G.P."/>
            <person name="Maranhao A.Q."/>
            <person name="Martinkovics C.T."/>
            <person name="Medeiros S.R.B."/>
            <person name="Moreira M.A.M."/>
            <person name="Neiva M."/>
            <person name="Ramalho-Neto C.E."/>
            <person name="Nicolas M.F."/>
            <person name="Oliveira S.C."/>
            <person name="Paixao R.F.C."/>
            <person name="Pedrosa F.O."/>
            <person name="Pena S.D.J."/>
            <person name="Pereira M."/>
            <person name="Pereira-Ferrari L."/>
            <person name="Piffer I."/>
            <person name="Pinto L.S."/>
            <person name="Potrich D.P."/>
            <person name="Salim A.C.M."/>
            <person name="Santos F.R."/>
            <person name="Schmitt R."/>
            <person name="Schneider M.P.C."/>
            <person name="Schrank A."/>
            <person name="Schrank I.S."/>
            <person name="Schuck A.F."/>
            <person name="Seuanez H.N."/>
            <person name="Silva D.W."/>
            <person name="Silva R."/>
            <person name="Silva S.C."/>
            <person name="Soares C.M.A."/>
            <person name="Souza K.R.L."/>
            <person name="Souza R.C."/>
            <person name="Staats C.C."/>
            <person name="Steffens M.B.R."/>
            <person name="Teixeira S.M.R."/>
            <person name="Urmenyi T.P."/>
            <person name="Vainstein M.H."/>
            <person name="Zuccherato L.W."/>
            <person name="Simpson A.J.G."/>
            <person name="Zaha A."/>
        </authorList>
    </citation>
    <scope>NUCLEOTIDE SEQUENCE [LARGE SCALE GENOMIC DNA]</scope>
    <source>
        <strain>53</strain>
    </source>
</reference>
<gene>
    <name evidence="1" type="primary">rplE</name>
    <name type="ordered locus">MS53_0631</name>
</gene>
<proteinExistence type="inferred from homology"/>
<comment type="function">
    <text evidence="1">This is one of the proteins that bind and probably mediate the attachment of the 5S RNA into the large ribosomal subunit, where it forms part of the central protuberance. In the 70S ribosome it contacts protein S13 of the 30S subunit (bridge B1b), connecting the 2 subunits; this bridge is implicated in subunit movement. Contacts the P site tRNA; the 5S rRNA and some of its associated proteins might help stabilize positioning of ribosome-bound tRNAs.</text>
</comment>
<comment type="subunit">
    <text evidence="1">Part of the 50S ribosomal subunit; part of the 5S rRNA/L5/L18/L25 subcomplex. Contacts the 5S rRNA and the P site tRNA. Forms a bridge to the 30S subunit in the 70S ribosome.</text>
</comment>
<comment type="similarity">
    <text evidence="1">Belongs to the universal ribosomal protein uL5 family.</text>
</comment>
<accession>Q4A5D3</accession>
<sequence length="186" mass="21314">MLKQKYKSEVVSALVKEFQYSSVMEVPRIEKIVVNMTAGKEVNNSKAIEEVLNELTLITGQKPYQTVAKKSNAAWKLRKNMPMGGKVTLRKDRMWDFLEKLITVAMPRIRDFRGANHKAFDKNGNFALGIKEEIIFPEIEFDKIRRNKGLDVIVVTTAKTAKESKRLLELLGMPFDDKKHTKESAK</sequence>
<dbReference type="EMBL" id="AE017245">
    <property type="protein sequence ID" value="AAZ44038.2"/>
    <property type="molecule type" value="Genomic_DNA"/>
</dbReference>
<dbReference type="RefSeq" id="WP_109537289.1">
    <property type="nucleotide sequence ID" value="NC_007294.1"/>
</dbReference>
<dbReference type="SMR" id="Q4A5D3"/>
<dbReference type="STRING" id="262723.MS53_0631"/>
<dbReference type="KEGG" id="msy:MS53_0631"/>
<dbReference type="eggNOG" id="COG0094">
    <property type="taxonomic scope" value="Bacteria"/>
</dbReference>
<dbReference type="HOGENOM" id="CLU_061015_2_1_14"/>
<dbReference type="OrthoDB" id="9806626at2"/>
<dbReference type="Proteomes" id="UP000000549">
    <property type="component" value="Chromosome"/>
</dbReference>
<dbReference type="GO" id="GO:1990904">
    <property type="term" value="C:ribonucleoprotein complex"/>
    <property type="evidence" value="ECO:0007669"/>
    <property type="project" value="UniProtKB-KW"/>
</dbReference>
<dbReference type="GO" id="GO:0005840">
    <property type="term" value="C:ribosome"/>
    <property type="evidence" value="ECO:0007669"/>
    <property type="project" value="UniProtKB-KW"/>
</dbReference>
<dbReference type="GO" id="GO:0019843">
    <property type="term" value="F:rRNA binding"/>
    <property type="evidence" value="ECO:0007669"/>
    <property type="project" value="UniProtKB-UniRule"/>
</dbReference>
<dbReference type="GO" id="GO:0003735">
    <property type="term" value="F:structural constituent of ribosome"/>
    <property type="evidence" value="ECO:0007669"/>
    <property type="project" value="InterPro"/>
</dbReference>
<dbReference type="GO" id="GO:0000049">
    <property type="term" value="F:tRNA binding"/>
    <property type="evidence" value="ECO:0007669"/>
    <property type="project" value="UniProtKB-UniRule"/>
</dbReference>
<dbReference type="GO" id="GO:0006412">
    <property type="term" value="P:translation"/>
    <property type="evidence" value="ECO:0007669"/>
    <property type="project" value="UniProtKB-UniRule"/>
</dbReference>
<dbReference type="FunFam" id="3.30.1440.10:FF:000001">
    <property type="entry name" value="50S ribosomal protein L5"/>
    <property type="match status" value="1"/>
</dbReference>
<dbReference type="Gene3D" id="3.30.1440.10">
    <property type="match status" value="1"/>
</dbReference>
<dbReference type="HAMAP" id="MF_01333_B">
    <property type="entry name" value="Ribosomal_uL5_B"/>
    <property type="match status" value="1"/>
</dbReference>
<dbReference type="InterPro" id="IPR002132">
    <property type="entry name" value="Ribosomal_uL5"/>
</dbReference>
<dbReference type="InterPro" id="IPR020930">
    <property type="entry name" value="Ribosomal_uL5_bac-type"/>
</dbReference>
<dbReference type="InterPro" id="IPR031309">
    <property type="entry name" value="Ribosomal_uL5_C"/>
</dbReference>
<dbReference type="InterPro" id="IPR022803">
    <property type="entry name" value="Ribosomal_uL5_dom_sf"/>
</dbReference>
<dbReference type="InterPro" id="IPR031310">
    <property type="entry name" value="Ribosomal_uL5_N"/>
</dbReference>
<dbReference type="NCBIfam" id="NF000585">
    <property type="entry name" value="PRK00010.1"/>
    <property type="match status" value="1"/>
</dbReference>
<dbReference type="PANTHER" id="PTHR11994">
    <property type="entry name" value="60S RIBOSOMAL PROTEIN L11-RELATED"/>
    <property type="match status" value="1"/>
</dbReference>
<dbReference type="Pfam" id="PF00281">
    <property type="entry name" value="Ribosomal_L5"/>
    <property type="match status" value="1"/>
</dbReference>
<dbReference type="Pfam" id="PF00673">
    <property type="entry name" value="Ribosomal_L5_C"/>
    <property type="match status" value="1"/>
</dbReference>
<dbReference type="PIRSF" id="PIRSF002161">
    <property type="entry name" value="Ribosomal_L5"/>
    <property type="match status" value="1"/>
</dbReference>
<dbReference type="SUPFAM" id="SSF55282">
    <property type="entry name" value="RL5-like"/>
    <property type="match status" value="1"/>
</dbReference>
<keyword id="KW-1185">Reference proteome</keyword>
<keyword id="KW-0687">Ribonucleoprotein</keyword>
<keyword id="KW-0689">Ribosomal protein</keyword>
<keyword id="KW-0694">RNA-binding</keyword>
<keyword id="KW-0699">rRNA-binding</keyword>
<keyword id="KW-0820">tRNA-binding</keyword>
<feature type="chain" id="PRO_0000243026" description="Large ribosomal subunit protein uL5">
    <location>
        <begin position="1"/>
        <end position="186"/>
    </location>
</feature>
<protein>
    <recommendedName>
        <fullName evidence="1">Large ribosomal subunit protein uL5</fullName>
    </recommendedName>
    <alternativeName>
        <fullName evidence="2">50S ribosomal protein L5</fullName>
    </alternativeName>
</protein>
<name>RL5_MYCS5</name>
<organism>
    <name type="scientific">Mycoplasmopsis synoviae (strain 53)</name>
    <name type="common">Mycoplasma synoviae</name>
    <dbReference type="NCBI Taxonomy" id="262723"/>
    <lineage>
        <taxon>Bacteria</taxon>
        <taxon>Bacillati</taxon>
        <taxon>Mycoplasmatota</taxon>
        <taxon>Mycoplasmoidales</taxon>
        <taxon>Metamycoplasmataceae</taxon>
        <taxon>Mycoplasmopsis</taxon>
    </lineage>
</organism>